<accession>D5UPJ5</accession>
<name>MSHC_TSUPD</name>
<feature type="chain" id="PRO_0000400493" description="L-cysteine:1D-myo-inositol 2-amino-2-deoxy-alpha-D-glucopyranoside ligase">
    <location>
        <begin position="1"/>
        <end position="414"/>
    </location>
</feature>
<feature type="short sequence motif" description="'HIGH' region" evidence="1">
    <location>
        <begin position="45"/>
        <end position="55"/>
    </location>
</feature>
<feature type="short sequence motif" description="'ERGGDP' region" evidence="1">
    <location>
        <begin position="187"/>
        <end position="192"/>
    </location>
</feature>
<feature type="short sequence motif" description="'KMSKS' region" evidence="1">
    <location>
        <begin position="289"/>
        <end position="293"/>
    </location>
</feature>
<feature type="binding site" evidence="1">
    <location>
        <begin position="43"/>
        <end position="46"/>
    </location>
    <ligand>
        <name>L-cysteinyl-5'-AMP</name>
        <dbReference type="ChEBI" id="CHEBI:144924"/>
    </ligand>
</feature>
<feature type="binding site" evidence="1">
    <location>
        <position position="43"/>
    </location>
    <ligand>
        <name>Zn(2+)</name>
        <dbReference type="ChEBI" id="CHEBI:29105"/>
    </ligand>
</feature>
<feature type="binding site" evidence="1">
    <location>
        <position position="58"/>
    </location>
    <ligand>
        <name>L-cysteinyl-5'-AMP</name>
        <dbReference type="ChEBI" id="CHEBI:144924"/>
    </ligand>
</feature>
<feature type="binding site" evidence="1">
    <location>
        <begin position="81"/>
        <end position="83"/>
    </location>
    <ligand>
        <name>L-cysteinyl-5'-AMP</name>
        <dbReference type="ChEBI" id="CHEBI:144924"/>
    </ligand>
</feature>
<feature type="binding site" evidence="1">
    <location>
        <position position="227"/>
    </location>
    <ligand>
        <name>L-cysteinyl-5'-AMP</name>
        <dbReference type="ChEBI" id="CHEBI:144924"/>
    </ligand>
</feature>
<feature type="binding site" evidence="1">
    <location>
        <position position="231"/>
    </location>
    <ligand>
        <name>Zn(2+)</name>
        <dbReference type="ChEBI" id="CHEBI:29105"/>
    </ligand>
</feature>
<feature type="binding site" evidence="1">
    <location>
        <begin position="249"/>
        <end position="251"/>
    </location>
    <ligand>
        <name>L-cysteinyl-5'-AMP</name>
        <dbReference type="ChEBI" id="CHEBI:144924"/>
    </ligand>
</feature>
<feature type="binding site" evidence="1">
    <location>
        <position position="256"/>
    </location>
    <ligand>
        <name>Zn(2+)</name>
        <dbReference type="ChEBI" id="CHEBI:29105"/>
    </ligand>
</feature>
<feature type="binding site" evidence="1">
    <location>
        <position position="283"/>
    </location>
    <ligand>
        <name>L-cysteinyl-5'-AMP</name>
        <dbReference type="ChEBI" id="CHEBI:144924"/>
    </ligand>
</feature>
<dbReference type="EC" id="6.3.1.13" evidence="1"/>
<dbReference type="EMBL" id="CP001966">
    <property type="protein sequence ID" value="ADG78751.1"/>
    <property type="molecule type" value="Genomic_DNA"/>
</dbReference>
<dbReference type="RefSeq" id="WP_013126773.1">
    <property type="nucleotide sequence ID" value="NC_014158.1"/>
</dbReference>
<dbReference type="SMR" id="D5UPJ5"/>
<dbReference type="STRING" id="521096.Tpau_2140"/>
<dbReference type="KEGG" id="tpr:Tpau_2140"/>
<dbReference type="eggNOG" id="COG0215">
    <property type="taxonomic scope" value="Bacteria"/>
</dbReference>
<dbReference type="HOGENOM" id="CLU_013528_0_0_11"/>
<dbReference type="Proteomes" id="UP000001213">
    <property type="component" value="Chromosome"/>
</dbReference>
<dbReference type="GO" id="GO:0005829">
    <property type="term" value="C:cytosol"/>
    <property type="evidence" value="ECO:0007669"/>
    <property type="project" value="TreeGrafter"/>
</dbReference>
<dbReference type="GO" id="GO:0005524">
    <property type="term" value="F:ATP binding"/>
    <property type="evidence" value="ECO:0007669"/>
    <property type="project" value="UniProtKB-KW"/>
</dbReference>
<dbReference type="GO" id="GO:0035446">
    <property type="term" value="F:cysteine-glucosaminylinositol ligase activity"/>
    <property type="evidence" value="ECO:0007669"/>
    <property type="project" value="UniProtKB-UniRule"/>
</dbReference>
<dbReference type="GO" id="GO:0004817">
    <property type="term" value="F:cysteine-tRNA ligase activity"/>
    <property type="evidence" value="ECO:0007669"/>
    <property type="project" value="TreeGrafter"/>
</dbReference>
<dbReference type="GO" id="GO:0008270">
    <property type="term" value="F:zinc ion binding"/>
    <property type="evidence" value="ECO:0007669"/>
    <property type="project" value="UniProtKB-UniRule"/>
</dbReference>
<dbReference type="GO" id="GO:0006423">
    <property type="term" value="P:cysteinyl-tRNA aminoacylation"/>
    <property type="evidence" value="ECO:0007669"/>
    <property type="project" value="TreeGrafter"/>
</dbReference>
<dbReference type="GO" id="GO:0010125">
    <property type="term" value="P:mycothiol biosynthetic process"/>
    <property type="evidence" value="ECO:0007669"/>
    <property type="project" value="UniProtKB-UniRule"/>
</dbReference>
<dbReference type="CDD" id="cd07955">
    <property type="entry name" value="Anticodon_Ia_Cys_like"/>
    <property type="match status" value="1"/>
</dbReference>
<dbReference type="CDD" id="cd00672">
    <property type="entry name" value="CysRS_core"/>
    <property type="match status" value="1"/>
</dbReference>
<dbReference type="FunFam" id="3.40.50.620:FF:000134">
    <property type="entry name" value="L-cysteine:1D-myo-inositol 2-amino-2-deoxy-alpha-D-glucopyranoside ligase"/>
    <property type="match status" value="1"/>
</dbReference>
<dbReference type="Gene3D" id="1.20.120.640">
    <property type="entry name" value="Anticodon-binding domain of a subclass of class I aminoacyl-tRNA synthetases"/>
    <property type="match status" value="1"/>
</dbReference>
<dbReference type="Gene3D" id="3.40.50.620">
    <property type="entry name" value="HUPs"/>
    <property type="match status" value="1"/>
</dbReference>
<dbReference type="HAMAP" id="MF_01697">
    <property type="entry name" value="MshC"/>
    <property type="match status" value="1"/>
</dbReference>
<dbReference type="InterPro" id="IPR024909">
    <property type="entry name" value="Cys-tRNA/MSH_ligase"/>
</dbReference>
<dbReference type="InterPro" id="IPR017812">
    <property type="entry name" value="Mycothiol_ligase_MshC"/>
</dbReference>
<dbReference type="InterPro" id="IPR014729">
    <property type="entry name" value="Rossmann-like_a/b/a_fold"/>
</dbReference>
<dbReference type="InterPro" id="IPR032678">
    <property type="entry name" value="tRNA-synt_1_cat_dom"/>
</dbReference>
<dbReference type="NCBIfam" id="TIGR03447">
    <property type="entry name" value="mycothiol_MshC"/>
    <property type="match status" value="1"/>
</dbReference>
<dbReference type="PANTHER" id="PTHR10890:SF3">
    <property type="entry name" value="CYSTEINE--TRNA LIGASE, CYTOPLASMIC"/>
    <property type="match status" value="1"/>
</dbReference>
<dbReference type="PANTHER" id="PTHR10890">
    <property type="entry name" value="CYSTEINYL-TRNA SYNTHETASE"/>
    <property type="match status" value="1"/>
</dbReference>
<dbReference type="Pfam" id="PF01406">
    <property type="entry name" value="tRNA-synt_1e"/>
    <property type="match status" value="1"/>
</dbReference>
<dbReference type="PRINTS" id="PR00983">
    <property type="entry name" value="TRNASYNTHCYS"/>
</dbReference>
<dbReference type="SUPFAM" id="SSF52374">
    <property type="entry name" value="Nucleotidylyl transferase"/>
    <property type="match status" value="1"/>
</dbReference>
<comment type="function">
    <text evidence="1">Catalyzes the ATP-dependent condensation of GlcN-Ins and L-cysteine to form L-Cys-GlcN-Ins.</text>
</comment>
<comment type="catalytic activity">
    <reaction evidence="1">
        <text>1D-myo-inositol 2-amino-2-deoxy-alpha-D-glucopyranoside + L-cysteine + ATP = 1D-myo-inositol 2-(L-cysteinylamino)-2-deoxy-alpha-D-glucopyranoside + AMP + diphosphate + H(+)</text>
        <dbReference type="Rhea" id="RHEA:26176"/>
        <dbReference type="ChEBI" id="CHEBI:15378"/>
        <dbReference type="ChEBI" id="CHEBI:30616"/>
        <dbReference type="ChEBI" id="CHEBI:33019"/>
        <dbReference type="ChEBI" id="CHEBI:35235"/>
        <dbReference type="ChEBI" id="CHEBI:58886"/>
        <dbReference type="ChEBI" id="CHEBI:58887"/>
        <dbReference type="ChEBI" id="CHEBI:456215"/>
        <dbReference type="EC" id="6.3.1.13"/>
    </reaction>
</comment>
<comment type="cofactor">
    <cofactor evidence="1">
        <name>Zn(2+)</name>
        <dbReference type="ChEBI" id="CHEBI:29105"/>
    </cofactor>
    <text evidence="1">Binds 1 zinc ion per subunit.</text>
</comment>
<comment type="subunit">
    <text evidence="1">Monomer.</text>
</comment>
<comment type="similarity">
    <text evidence="1">Belongs to the class-I aminoacyl-tRNA synthetase family. MshC subfamily.</text>
</comment>
<evidence type="ECO:0000255" key="1">
    <source>
        <dbReference type="HAMAP-Rule" id="MF_01697"/>
    </source>
</evidence>
<organism>
    <name type="scientific">Tsukamurella paurometabola (strain ATCC 8368 / DSM 20162 / CCUG 35730 / CIP 100753 / JCM 10117 / KCTC 9821 / NBRC 16120 / NCIMB 702349 / NCTC 13040)</name>
    <name type="common">Corynebacterium paurometabolum</name>
    <dbReference type="NCBI Taxonomy" id="521096"/>
    <lineage>
        <taxon>Bacteria</taxon>
        <taxon>Bacillati</taxon>
        <taxon>Actinomycetota</taxon>
        <taxon>Actinomycetes</taxon>
        <taxon>Mycobacteriales</taxon>
        <taxon>Tsukamurellaceae</taxon>
        <taxon>Tsukamurella</taxon>
    </lineage>
</organism>
<protein>
    <recommendedName>
        <fullName evidence="1">L-cysteine:1D-myo-inositol 2-amino-2-deoxy-alpha-D-glucopyranoside ligase</fullName>
        <shortName evidence="1">L-Cys:GlcN-Ins ligase</shortName>
        <ecNumber evidence="1">6.3.1.13</ecNumber>
    </recommendedName>
    <alternativeName>
        <fullName evidence="1">Mycothiol ligase</fullName>
        <shortName evidence="1">MSH ligase</shortName>
    </alternativeName>
</protein>
<reference key="1">
    <citation type="journal article" date="2011" name="Stand. Genomic Sci.">
        <title>Complete genome sequence of Tsukamurella paurometabola type strain (no. 33).</title>
        <authorList>
            <person name="Munk A.C."/>
            <person name="Lapidus A."/>
            <person name="Lucas S."/>
            <person name="Nolan M."/>
            <person name="Tice H."/>
            <person name="Cheng J.F."/>
            <person name="Del Rio T.G."/>
            <person name="Goodwin L."/>
            <person name="Pitluck S."/>
            <person name="Liolios K."/>
            <person name="Huntemann M."/>
            <person name="Ivanova N."/>
            <person name="Mavromatis K."/>
            <person name="Mikhailova N."/>
            <person name="Pati A."/>
            <person name="Chen A."/>
            <person name="Palaniappan K."/>
            <person name="Tapia R."/>
            <person name="Han C."/>
            <person name="Land M."/>
            <person name="Hauser L."/>
            <person name="Chang Y.J."/>
            <person name="Jeffries C.D."/>
            <person name="Brettin T."/>
            <person name="Yasawong M."/>
            <person name="Brambilla E.M."/>
            <person name="Rohde M."/>
            <person name="Sikorski J."/>
            <person name="Goeker M."/>
            <person name="Detter J.C."/>
            <person name="Woyke T."/>
            <person name="Bristow J."/>
            <person name="Eisen J.A."/>
            <person name="Markowitz V."/>
            <person name="Hugenholtz P."/>
            <person name="Kyrpides N.C."/>
            <person name="Klenk H.P."/>
        </authorList>
    </citation>
    <scope>NUCLEOTIDE SEQUENCE [LARGE SCALE GENOMIC DNA]</scope>
    <source>
        <strain>ATCC 8368 / DSM 20162 / CCUG 35730 / CIP 100753 / JCM 10117 / KCTC 9821 / NBRC 16120 / NCIMB 702349 / NCTC 13040</strain>
    </source>
</reference>
<gene>
    <name evidence="1" type="primary">mshC</name>
    <name type="ordered locus">Tpau_2140</name>
</gene>
<proteinExistence type="inferred from homology"/>
<keyword id="KW-0067">ATP-binding</keyword>
<keyword id="KW-0436">Ligase</keyword>
<keyword id="KW-0479">Metal-binding</keyword>
<keyword id="KW-0547">Nucleotide-binding</keyword>
<keyword id="KW-1185">Reference proteome</keyword>
<keyword id="KW-0862">Zinc</keyword>
<sequence>MRSWPSPAVPTLSGPSVPLRLYDTSDQAVRSVNPGAVSGMYVCGITPYDATHLGHAATYLTFDLINRVLRANGHEVHYVQNVTDVDDPLFERAARDGIDWRDLGARETDLFCEDMQALRVLAPQDYIGAVESIDEVIALVGRLLENGAAYIVDDPEFPDVYYRTDATEQFGYESGYDRATMERFFAERGGDPDRPGKRDPLDALLWRAARPGEPSWPSPQGPGRPGWHIECAAIAQNRLGVGFDIQGGGSDLIFPHHEFSAAHVEADTGERRFARHYVHAAMIGLDGEKMSKSRGNLVFVSTLRRAGVDPAAIRLGLFEGHYRTDRAWSDEVLARAQARLDLWRNAFAAASSPDGAELVGRLRRYLADDLDTPKALSALDAWAHRAVTSGGPDPDGPSTVATAVDALLGVAVSA</sequence>